<reference key="1">
    <citation type="journal article" date="1999" name="FEBS Lett.">
        <title>The mitochondrial TIM22 preprotein translocase is highly conserved throughout the eukaryotic kingdom.</title>
        <authorList>
            <person name="Bauer M.F."/>
            <person name="Rothbauer U."/>
            <person name="Muehlenbein N."/>
            <person name="Smith R.J.H."/>
            <person name="Gerbitz K.-D."/>
            <person name="Neupert W."/>
            <person name="Brunner M."/>
            <person name="Hofmann S."/>
        </authorList>
    </citation>
    <scope>NUCLEOTIDE SEQUENCE [MRNA]</scope>
</reference>
<reference key="2">
    <citation type="journal article" date="1998" name="Science">
        <title>Genome sequence of the nematode C. elegans: a platform for investigating biology.</title>
        <authorList>
            <consortium name="The C. elegans sequencing consortium"/>
        </authorList>
    </citation>
    <scope>NUCLEOTIDE SEQUENCE [LARGE SCALE GENOMIC DNA]</scope>
    <source>
        <strain>Bristol N2</strain>
    </source>
</reference>
<reference key="3">
    <citation type="journal article" date="2004" name="J. Biol. Chem.">
        <title>Defective mitochondrial protein translocation precludes normal Caenorhabditis elegans development.</title>
        <authorList>
            <person name="Curran S.P."/>
            <person name="Leverich E.P."/>
            <person name="Koehler C.M."/>
            <person name="Larsen P.L."/>
        </authorList>
    </citation>
    <scope>FUNCTION</scope>
    <scope>DISRUPTION PHENOTYPE</scope>
</reference>
<keyword id="KW-0143">Chaperone</keyword>
<keyword id="KW-1015">Disulfide bond</keyword>
<keyword id="KW-0472">Membrane</keyword>
<keyword id="KW-0479">Metal-binding</keyword>
<keyword id="KW-0496">Mitochondrion</keyword>
<keyword id="KW-0999">Mitochondrion inner membrane</keyword>
<keyword id="KW-0653">Protein transport</keyword>
<keyword id="KW-1185">Reference proteome</keyword>
<keyword id="KW-0811">Translocation</keyword>
<keyword id="KW-0813">Transport</keyword>
<keyword id="KW-0862">Zinc</keyword>
<feature type="chain" id="PRO_0000228027" description="Mitochondrial import inner membrane translocase subunit Tim8">
    <location>
        <begin position="1"/>
        <end position="83"/>
    </location>
</feature>
<feature type="short sequence motif" description="Twin CX3C motif" evidence="1">
    <location>
        <begin position="35"/>
        <end position="60"/>
    </location>
</feature>
<feature type="disulfide bond" evidence="1">
    <location>
        <begin position="35"/>
        <end position="60"/>
    </location>
</feature>
<feature type="disulfide bond" evidence="1">
    <location>
        <begin position="39"/>
        <end position="56"/>
    </location>
</feature>
<feature type="sequence conflict" description="In Ref. 1; AAD39993." evidence="5" ref="1">
    <original>I</original>
    <variation>F</variation>
    <location>
        <position position="57"/>
    </location>
</feature>
<dbReference type="EMBL" id="AF150086">
    <property type="protein sequence ID" value="AAD39993.1"/>
    <property type="molecule type" value="mRNA"/>
</dbReference>
<dbReference type="EMBL" id="FO080225">
    <property type="protein sequence ID" value="CCD62165.1"/>
    <property type="molecule type" value="Genomic_DNA"/>
</dbReference>
<dbReference type="RefSeq" id="NP_497467.1">
    <property type="nucleotide sequence ID" value="NM_065066.6"/>
</dbReference>
<dbReference type="SMR" id="Q9N408"/>
<dbReference type="BioGRID" id="40586">
    <property type="interactions" value="2"/>
</dbReference>
<dbReference type="FunCoup" id="Q9N408">
    <property type="interactions" value="1522"/>
</dbReference>
<dbReference type="STRING" id="6239.Y39A3CR.4.1"/>
<dbReference type="PaxDb" id="6239-Y39A3CR.4"/>
<dbReference type="PeptideAtlas" id="Q9N408"/>
<dbReference type="EnsemblMetazoa" id="Y39A3CR.4.1">
    <property type="protein sequence ID" value="Y39A3CR.4.1"/>
    <property type="gene ID" value="WBGene00000941"/>
</dbReference>
<dbReference type="GeneID" id="175331"/>
<dbReference type="KEGG" id="cel:CELE_Y39A3CR.4"/>
<dbReference type="UCSC" id="Y39A3CR.4">
    <property type="organism name" value="c. elegans"/>
</dbReference>
<dbReference type="AGR" id="WB:WBGene00000941"/>
<dbReference type="CTD" id="175331"/>
<dbReference type="WormBase" id="Y39A3CR.4">
    <property type="protein sequence ID" value="CE21655"/>
    <property type="gene ID" value="WBGene00000941"/>
    <property type="gene designation" value="ddp-1"/>
</dbReference>
<dbReference type="eggNOG" id="KOG3489">
    <property type="taxonomic scope" value="Eukaryota"/>
</dbReference>
<dbReference type="HOGENOM" id="CLU_141397_1_2_1"/>
<dbReference type="InParanoid" id="Q9N408"/>
<dbReference type="OMA" id="WDVCFAD"/>
<dbReference type="OrthoDB" id="344165at2759"/>
<dbReference type="PhylomeDB" id="Q9N408"/>
<dbReference type="PRO" id="PR:Q9N408"/>
<dbReference type="Proteomes" id="UP000001940">
    <property type="component" value="Chromosome III"/>
</dbReference>
<dbReference type="Bgee" id="WBGene00000941">
    <property type="expression patterns" value="Expressed in pharyngeal muscle cell (C elegans) and 4 other cell types or tissues"/>
</dbReference>
<dbReference type="GO" id="GO:0005743">
    <property type="term" value="C:mitochondrial inner membrane"/>
    <property type="evidence" value="ECO:0007669"/>
    <property type="project" value="UniProtKB-SubCell"/>
</dbReference>
<dbReference type="GO" id="GO:0046872">
    <property type="term" value="F:metal ion binding"/>
    <property type="evidence" value="ECO:0007669"/>
    <property type="project" value="UniProtKB-KW"/>
</dbReference>
<dbReference type="GO" id="GO:0007005">
    <property type="term" value="P:mitochondrion organization"/>
    <property type="evidence" value="ECO:0000315"/>
    <property type="project" value="WormBase"/>
</dbReference>
<dbReference type="GO" id="GO:0015031">
    <property type="term" value="P:protein transport"/>
    <property type="evidence" value="ECO:0007669"/>
    <property type="project" value="UniProtKB-KW"/>
</dbReference>
<dbReference type="FunFam" id="1.10.287.810:FF:000022">
    <property type="match status" value="1"/>
</dbReference>
<dbReference type="Gene3D" id="1.10.287.810">
    <property type="entry name" value="Mitochondrial import inner membrane translocase subunit tim13 like domains"/>
    <property type="match status" value="1"/>
</dbReference>
<dbReference type="InterPro" id="IPR004217">
    <property type="entry name" value="Tim10-like"/>
</dbReference>
<dbReference type="InterPro" id="IPR035427">
    <property type="entry name" value="Tim10-like_dom_sf"/>
</dbReference>
<dbReference type="Pfam" id="PF02953">
    <property type="entry name" value="zf-Tim10_DDP"/>
    <property type="match status" value="1"/>
</dbReference>
<dbReference type="SUPFAM" id="SSF144122">
    <property type="entry name" value="Tim10-like"/>
    <property type="match status" value="1"/>
</dbReference>
<name>TIM8_CAEEL</name>
<evidence type="ECO:0000250" key="1">
    <source>
        <dbReference type="UniProtKB" id="O74700"/>
    </source>
</evidence>
<evidence type="ECO:0000250" key="2">
    <source>
        <dbReference type="UniProtKB" id="Q17754"/>
    </source>
</evidence>
<evidence type="ECO:0000250" key="3">
    <source>
        <dbReference type="UniProtKB" id="Q9Y1A3"/>
    </source>
</evidence>
<evidence type="ECO:0000269" key="4">
    <source>
    </source>
</evidence>
<evidence type="ECO:0000305" key="5"/>
<evidence type="ECO:0000312" key="6">
    <source>
        <dbReference type="WormBase" id="Y39A3CR.4"/>
    </source>
</evidence>
<gene>
    <name evidence="6" type="primary">ddp-1</name>
    <name evidence="6" type="synonym">tim-8</name>
    <name evidence="6" type="ORF">Y39A3CR.4</name>
</gene>
<proteinExistence type="inferred from homology"/>
<organism>
    <name type="scientific">Caenorhabditis elegans</name>
    <dbReference type="NCBI Taxonomy" id="6239"/>
    <lineage>
        <taxon>Eukaryota</taxon>
        <taxon>Metazoa</taxon>
        <taxon>Ecdysozoa</taxon>
        <taxon>Nematoda</taxon>
        <taxon>Chromadorea</taxon>
        <taxon>Rhabditida</taxon>
        <taxon>Rhabditina</taxon>
        <taxon>Rhabditomorpha</taxon>
        <taxon>Rhabditoidea</taxon>
        <taxon>Rhabditidae</taxon>
        <taxon>Peloderinae</taxon>
        <taxon>Caenorhabditis</taxon>
    </lineage>
</organism>
<comment type="function">
    <text evidence="2 4">Mitochondrial intermembrane chaperone that participates in the import and insertion of some multi-pass transmembrane proteins into the mitochondrial inner membrane (By similarity). Also required for the transfer of beta-barrel precursors from the TOM complex to the sorting and assembly machinery (SAM complex) of the outer membrane (By similarity). Acts as a chaperone-like protein that protects the hydrophobic precursors from aggregation and guide them through the mitochondrial intermembrane space (By similarity). The ddp-1/tim-8-tim-13 complex mediates the import of some proteins while the predominant tim-9/tin-9.1-tim-10/tin-10 70 kDa complex mediates the import of much more proteins (PubMed:15485840).</text>
</comment>
<comment type="subunit">
    <text evidence="1">Heterohexamer; composed of 3 copies of ddp-1/tim-8 and 3 copies of tin-13/tim-13, named soluble 70 kDa complex. Associates with the TIM22 complex, whose core is composed of tim-22.</text>
</comment>
<comment type="subcellular location">
    <subcellularLocation>
        <location evidence="1">Mitochondrion inner membrane</location>
        <topology evidence="1">Peripheral membrane protein</topology>
        <orientation evidence="1">Intermembrane side</orientation>
    </subcellularLocation>
</comment>
<comment type="domain">
    <text evidence="1">The twin CX3C motif contains 4 conserved Cys residues that form 2 disulfide bonds in the mitochondrial intermembrane space. However, during the transit of ddp-1/tim-8 from cytoplasm into mitochondrion, the Cys residues probably coordinate zinc, thereby preventing folding and allowing its transfer across mitochondrial outer membrane.</text>
</comment>
<comment type="disruption phenotype">
    <text evidence="4">Worms display mitochondria with an interconnected morphology, presumably due to defects in the assembly of outer membrane fission/fusion components.</text>
</comment>
<comment type="similarity">
    <text evidence="5">Belongs to the small Tim family.</text>
</comment>
<sequence>MDSADPQLNRFLQQLQAETQRQKFTEQVHTLTGRCWDVCFADYRPPSKMDGKTQTCIQNCVNRMIDASNFMVEHLSKMNGGHV</sequence>
<protein>
    <recommendedName>
        <fullName evidence="3">Mitochondrial import inner membrane translocase subunit Tim8</fullName>
    </recommendedName>
</protein>
<accession>Q9N408</accession>
<accession>Q9Y0V8</accession>